<proteinExistence type="evidence at protein level"/>
<gene>
    <name type="primary">SNAPC2</name>
    <name type="synonym">SNAP45</name>
</gene>
<keyword id="KW-0539">Nucleus</keyword>
<keyword id="KW-1267">Proteomics identification</keyword>
<keyword id="KW-1185">Reference proteome</keyword>
<keyword id="KW-0804">Transcription</keyword>
<keyword id="KW-0805">Transcription regulation</keyword>
<protein>
    <recommendedName>
        <fullName>snRNA-activating protein complex subunit 2</fullName>
        <shortName>SNAPc subunit 2</shortName>
    </recommendedName>
    <alternativeName>
        <fullName>Proximal sequence element-binding transcription factor subunit delta</fullName>
        <shortName>PSE-binding factor subunit delta</shortName>
        <shortName>PTF subunit delta</shortName>
    </alternativeName>
    <alternativeName>
        <fullName>Small nuclear RNA-activating complex polypeptide 2</fullName>
    </alternativeName>
    <alternativeName>
        <fullName>snRNA-activating protein complex 45 kDa subunit</fullName>
        <shortName>SNAPc 45 kDa subunit</shortName>
    </alternativeName>
</protein>
<name>SNPC2_HUMAN</name>
<accession>Q13487</accession>
<accession>B2RBZ6</accession>
<accession>D6W663</accession>
<accession>Q13486</accession>
<comment type="function">
    <text>Part of the SNAPc complex required for the transcription of both RNA polymerase II and III small-nuclear RNA genes. Binds to the proximal sequence element (PSE), a non-TATA-box basal promoter element common to these 2 types of genes. Recruits TBP and BRF2 to the U6 snRNA TATA box.</text>
</comment>
<comment type="subunit">
    <text evidence="2 4">Part of the SNAPc complex composed of 5 subunits: SNAPC1, SNAPC2, SNAPC3, SNAPC4 and SNAPC5. SNAPC2 interacts with TBP and SNAPC4.</text>
</comment>
<comment type="subcellular location">
    <subcellularLocation>
        <location>Nucleus</location>
    </subcellularLocation>
</comment>
<feature type="chain" id="PRO_0000072020" description="snRNA-activating protein complex subunit 2">
    <location>
        <begin position="1"/>
        <end position="334"/>
    </location>
</feature>
<feature type="region of interest" description="Disordered" evidence="1">
    <location>
        <begin position="137"/>
        <end position="200"/>
    </location>
</feature>
<feature type="region of interest" description="Disordered" evidence="1">
    <location>
        <begin position="271"/>
        <end position="306"/>
    </location>
</feature>
<feature type="compositionally biased region" description="Low complexity" evidence="1">
    <location>
        <begin position="167"/>
        <end position="180"/>
    </location>
</feature>
<feature type="sequence variant" id="VAR_011806" description="In dbSNP:rs475002." evidence="3 5">
    <original>L</original>
    <variation>V</variation>
    <location>
        <position position="118"/>
    </location>
</feature>
<evidence type="ECO:0000256" key="1">
    <source>
        <dbReference type="SAM" id="MobiDB-lite"/>
    </source>
</evidence>
<evidence type="ECO:0000269" key="2">
    <source>
    </source>
</evidence>
<evidence type="ECO:0000269" key="3">
    <source>
    </source>
</evidence>
<evidence type="ECO:0000269" key="4">
    <source>
    </source>
</evidence>
<evidence type="ECO:0000269" key="5">
    <source ref="4"/>
</evidence>
<organism>
    <name type="scientific">Homo sapiens</name>
    <name type="common">Human</name>
    <dbReference type="NCBI Taxonomy" id="9606"/>
    <lineage>
        <taxon>Eukaryota</taxon>
        <taxon>Metazoa</taxon>
        <taxon>Chordata</taxon>
        <taxon>Craniata</taxon>
        <taxon>Vertebrata</taxon>
        <taxon>Euteleostomi</taxon>
        <taxon>Mammalia</taxon>
        <taxon>Eutheria</taxon>
        <taxon>Euarchontoglires</taxon>
        <taxon>Primates</taxon>
        <taxon>Haplorrhini</taxon>
        <taxon>Catarrhini</taxon>
        <taxon>Hominidae</taxon>
        <taxon>Homo</taxon>
    </lineage>
</organism>
<reference key="1">
    <citation type="journal article" date="1996" name="Proc. Natl. Acad. Sci. U.S.A.">
        <title>The SNAP45 subunit of the small nuclear RNA (snRNA) activating protein complex is required for RNA polymerase II and III snRNA gene transcription and interacts with the TATA box binding protein.</title>
        <authorList>
            <person name="Sadowski C.L."/>
            <person name="Henry R.W."/>
            <person name="Kobayashi R."/>
            <person name="Hernandez N."/>
        </authorList>
    </citation>
    <scope>NUCLEOTIDE SEQUENCE [MRNA]</scope>
    <source>
        <tissue>Teratocarcinoma</tissue>
    </source>
</reference>
<reference key="2">
    <citation type="journal article" date="1996" name="Mol. Cell. Biol.">
        <title>Cloning of two proximal sequence element-binding transcription factor subunits (gamma and delta) that are required for transcription of small nuclear RNA genes by RNA polymerases II and III and interact with the TATA-binding protein.</title>
        <authorList>
            <person name="Yoon J.B."/>
            <person name="Roeder R.G."/>
        </authorList>
    </citation>
    <scope>NUCLEOTIDE SEQUENCE [MRNA]</scope>
</reference>
<reference key="3">
    <citation type="journal article" date="2004" name="Nat. Genet.">
        <title>Complete sequencing and characterization of 21,243 full-length human cDNAs.</title>
        <authorList>
            <person name="Ota T."/>
            <person name="Suzuki Y."/>
            <person name="Nishikawa T."/>
            <person name="Otsuki T."/>
            <person name="Sugiyama T."/>
            <person name="Irie R."/>
            <person name="Wakamatsu A."/>
            <person name="Hayashi K."/>
            <person name="Sato H."/>
            <person name="Nagai K."/>
            <person name="Kimura K."/>
            <person name="Makita H."/>
            <person name="Sekine M."/>
            <person name="Obayashi M."/>
            <person name="Nishi T."/>
            <person name="Shibahara T."/>
            <person name="Tanaka T."/>
            <person name="Ishii S."/>
            <person name="Yamamoto J."/>
            <person name="Saito K."/>
            <person name="Kawai Y."/>
            <person name="Isono Y."/>
            <person name="Nakamura Y."/>
            <person name="Nagahari K."/>
            <person name="Murakami K."/>
            <person name="Yasuda T."/>
            <person name="Iwayanagi T."/>
            <person name="Wagatsuma M."/>
            <person name="Shiratori A."/>
            <person name="Sudo H."/>
            <person name="Hosoiri T."/>
            <person name="Kaku Y."/>
            <person name="Kodaira H."/>
            <person name="Kondo H."/>
            <person name="Sugawara M."/>
            <person name="Takahashi M."/>
            <person name="Kanda K."/>
            <person name="Yokoi T."/>
            <person name="Furuya T."/>
            <person name="Kikkawa E."/>
            <person name="Omura Y."/>
            <person name="Abe K."/>
            <person name="Kamihara K."/>
            <person name="Katsuta N."/>
            <person name="Sato K."/>
            <person name="Tanikawa M."/>
            <person name="Yamazaki M."/>
            <person name="Ninomiya K."/>
            <person name="Ishibashi T."/>
            <person name="Yamashita H."/>
            <person name="Murakawa K."/>
            <person name="Fujimori K."/>
            <person name="Tanai H."/>
            <person name="Kimata M."/>
            <person name="Watanabe M."/>
            <person name="Hiraoka S."/>
            <person name="Chiba Y."/>
            <person name="Ishida S."/>
            <person name="Ono Y."/>
            <person name="Takiguchi S."/>
            <person name="Watanabe S."/>
            <person name="Yosida M."/>
            <person name="Hotuta T."/>
            <person name="Kusano J."/>
            <person name="Kanehori K."/>
            <person name="Takahashi-Fujii A."/>
            <person name="Hara H."/>
            <person name="Tanase T.-O."/>
            <person name="Nomura Y."/>
            <person name="Togiya S."/>
            <person name="Komai F."/>
            <person name="Hara R."/>
            <person name="Takeuchi K."/>
            <person name="Arita M."/>
            <person name="Imose N."/>
            <person name="Musashino K."/>
            <person name="Yuuki H."/>
            <person name="Oshima A."/>
            <person name="Sasaki N."/>
            <person name="Aotsuka S."/>
            <person name="Yoshikawa Y."/>
            <person name="Matsunawa H."/>
            <person name="Ichihara T."/>
            <person name="Shiohata N."/>
            <person name="Sano S."/>
            <person name="Moriya S."/>
            <person name="Momiyama H."/>
            <person name="Satoh N."/>
            <person name="Takami S."/>
            <person name="Terashima Y."/>
            <person name="Suzuki O."/>
            <person name="Nakagawa S."/>
            <person name="Senoh A."/>
            <person name="Mizoguchi H."/>
            <person name="Goto Y."/>
            <person name="Shimizu F."/>
            <person name="Wakebe H."/>
            <person name="Hishigaki H."/>
            <person name="Watanabe T."/>
            <person name="Sugiyama A."/>
            <person name="Takemoto M."/>
            <person name="Kawakami B."/>
            <person name="Yamazaki M."/>
            <person name="Watanabe K."/>
            <person name="Kumagai A."/>
            <person name="Itakura S."/>
            <person name="Fukuzumi Y."/>
            <person name="Fujimori Y."/>
            <person name="Komiyama M."/>
            <person name="Tashiro H."/>
            <person name="Tanigami A."/>
            <person name="Fujiwara T."/>
            <person name="Ono T."/>
            <person name="Yamada K."/>
            <person name="Fujii Y."/>
            <person name="Ozaki K."/>
            <person name="Hirao M."/>
            <person name="Ohmori Y."/>
            <person name="Kawabata A."/>
            <person name="Hikiji T."/>
            <person name="Kobatake N."/>
            <person name="Inagaki H."/>
            <person name="Ikema Y."/>
            <person name="Okamoto S."/>
            <person name="Okitani R."/>
            <person name="Kawakami T."/>
            <person name="Noguchi S."/>
            <person name="Itoh T."/>
            <person name="Shigeta K."/>
            <person name="Senba T."/>
            <person name="Matsumura K."/>
            <person name="Nakajima Y."/>
            <person name="Mizuno T."/>
            <person name="Morinaga M."/>
            <person name="Sasaki M."/>
            <person name="Togashi T."/>
            <person name="Oyama M."/>
            <person name="Hata H."/>
            <person name="Watanabe M."/>
            <person name="Komatsu T."/>
            <person name="Mizushima-Sugano J."/>
            <person name="Satoh T."/>
            <person name="Shirai Y."/>
            <person name="Takahashi Y."/>
            <person name="Nakagawa K."/>
            <person name="Okumura K."/>
            <person name="Nagase T."/>
            <person name="Nomura N."/>
            <person name="Kikuchi H."/>
            <person name="Masuho Y."/>
            <person name="Yamashita R."/>
            <person name="Nakai K."/>
            <person name="Yada T."/>
            <person name="Nakamura Y."/>
            <person name="Ohara O."/>
            <person name="Isogai T."/>
            <person name="Sugano S."/>
        </authorList>
    </citation>
    <scope>NUCLEOTIDE SEQUENCE [LARGE SCALE MRNA]</scope>
    <scope>VARIANT VAL-118</scope>
    <source>
        <tissue>Lung</tissue>
    </source>
</reference>
<reference key="4">
    <citation type="submission" date="2005-09" db="EMBL/GenBank/DDBJ databases">
        <authorList>
            <person name="Mural R.J."/>
            <person name="Istrail S."/>
            <person name="Sutton G.G."/>
            <person name="Florea L."/>
            <person name="Halpern A.L."/>
            <person name="Mobarry C.M."/>
            <person name="Lippert R."/>
            <person name="Walenz B."/>
            <person name="Shatkay H."/>
            <person name="Dew I."/>
            <person name="Miller J.R."/>
            <person name="Flanigan M.J."/>
            <person name="Edwards N.J."/>
            <person name="Bolanos R."/>
            <person name="Fasulo D."/>
            <person name="Halldorsson B.V."/>
            <person name="Hannenhalli S."/>
            <person name="Turner R."/>
            <person name="Yooseph S."/>
            <person name="Lu F."/>
            <person name="Nusskern D.R."/>
            <person name="Shue B.C."/>
            <person name="Zheng X.H."/>
            <person name="Zhong F."/>
            <person name="Delcher A.L."/>
            <person name="Huson D.H."/>
            <person name="Kravitz S.A."/>
            <person name="Mouchard L."/>
            <person name="Reinert K."/>
            <person name="Remington K.A."/>
            <person name="Clark A.G."/>
            <person name="Waterman M.S."/>
            <person name="Eichler E.E."/>
            <person name="Adams M.D."/>
            <person name="Hunkapiller M.W."/>
            <person name="Myers E.W."/>
            <person name="Venter J.C."/>
        </authorList>
    </citation>
    <scope>NUCLEOTIDE SEQUENCE [LARGE SCALE GENOMIC DNA]</scope>
    <scope>VARIANT VAL-118</scope>
</reference>
<reference key="5">
    <citation type="journal article" date="2004" name="Genome Res.">
        <title>The status, quality, and expansion of the NIH full-length cDNA project: the Mammalian Gene Collection (MGC).</title>
        <authorList>
            <consortium name="The MGC Project Team"/>
        </authorList>
    </citation>
    <scope>NUCLEOTIDE SEQUENCE [LARGE SCALE MRNA]</scope>
    <source>
        <tissue>Skin</tissue>
    </source>
</reference>
<reference key="6">
    <citation type="journal article" date="1998" name="Mol. Cell. Biol.">
        <title>The large subunit of basal transcription factor SNAPc is a Myb domain protein that interacts with Oct-1.</title>
        <authorList>
            <person name="Wong M.W."/>
            <person name="Henry R.W."/>
            <person name="Ma B."/>
            <person name="Kobayashi R."/>
            <person name="Klages N."/>
            <person name="Matthias P."/>
            <person name="Strubin M."/>
            <person name="Hernandez N."/>
        </authorList>
    </citation>
    <scope>INTERACTION WITH SNAPC4</scope>
</reference>
<reference key="7">
    <citation type="journal article" date="2003" name="J. Biol. Chem.">
        <title>The small nuclear RNA-activating protein 190 Myb DNA binding domain stimulates TATA box-binding protein-TATA box recognition.</title>
        <authorList>
            <person name="Hinkley C.S."/>
            <person name="Hirsch H.A."/>
            <person name="Gu L."/>
            <person name="LaMere B."/>
            <person name="Henry R.W."/>
        </authorList>
    </citation>
    <scope>INTERACTION WITH TBP</scope>
</reference>
<dbReference type="EMBL" id="U44898">
    <property type="protein sequence ID" value="AAB06230.1"/>
    <property type="molecule type" value="mRNA"/>
</dbReference>
<dbReference type="EMBL" id="U44755">
    <property type="protein sequence ID" value="AAC50359.1"/>
    <property type="molecule type" value="mRNA"/>
</dbReference>
<dbReference type="EMBL" id="AK314878">
    <property type="protein sequence ID" value="BAG37393.1"/>
    <property type="molecule type" value="mRNA"/>
</dbReference>
<dbReference type="EMBL" id="CH471139">
    <property type="protein sequence ID" value="EAW68957.1"/>
    <property type="molecule type" value="Genomic_DNA"/>
</dbReference>
<dbReference type="EMBL" id="CH471139">
    <property type="protein sequence ID" value="EAW68958.1"/>
    <property type="molecule type" value="Genomic_DNA"/>
</dbReference>
<dbReference type="EMBL" id="BC011868">
    <property type="protein sequence ID" value="AAH11868.1"/>
    <property type="molecule type" value="mRNA"/>
</dbReference>
<dbReference type="CCDS" id="CCDS12190.1"/>
<dbReference type="PIR" id="JC6082">
    <property type="entry name" value="JC6082"/>
</dbReference>
<dbReference type="RefSeq" id="NP_003074.1">
    <property type="nucleotide sequence ID" value="NM_003083.4"/>
</dbReference>
<dbReference type="SMR" id="Q13487"/>
<dbReference type="BioGRID" id="112502">
    <property type="interactions" value="10"/>
</dbReference>
<dbReference type="ComplexPortal" id="CPX-8637">
    <property type="entry name" value="SNAPc snRNA activating protein complex"/>
</dbReference>
<dbReference type="CORUM" id="Q13487"/>
<dbReference type="DIP" id="DIP-505N"/>
<dbReference type="FunCoup" id="Q13487">
    <property type="interactions" value="1813"/>
</dbReference>
<dbReference type="IntAct" id="Q13487">
    <property type="interactions" value="5"/>
</dbReference>
<dbReference type="MINT" id="Q13487"/>
<dbReference type="STRING" id="9606.ENSP00000221573"/>
<dbReference type="GlyGen" id="Q13487">
    <property type="glycosylation" value="2 sites"/>
</dbReference>
<dbReference type="iPTMnet" id="Q13487"/>
<dbReference type="PhosphoSitePlus" id="Q13487"/>
<dbReference type="BioMuta" id="SNAPC2"/>
<dbReference type="DMDM" id="8134714"/>
<dbReference type="jPOST" id="Q13487"/>
<dbReference type="MassIVE" id="Q13487"/>
<dbReference type="PaxDb" id="9606-ENSP00000221573"/>
<dbReference type="PeptideAtlas" id="Q13487"/>
<dbReference type="ProteomicsDB" id="59480"/>
<dbReference type="Pumba" id="Q13487"/>
<dbReference type="Antibodypedia" id="12285">
    <property type="antibodies" value="149 antibodies from 23 providers"/>
</dbReference>
<dbReference type="DNASU" id="6618"/>
<dbReference type="Ensembl" id="ENST00000221573.11">
    <property type="protein sequence ID" value="ENSP00000221573.5"/>
    <property type="gene ID" value="ENSG00000104976.13"/>
</dbReference>
<dbReference type="GeneID" id="6618"/>
<dbReference type="KEGG" id="hsa:6618"/>
<dbReference type="MANE-Select" id="ENST00000221573.11">
    <property type="protein sequence ID" value="ENSP00000221573.5"/>
    <property type="RefSeq nucleotide sequence ID" value="NM_003083.4"/>
    <property type="RefSeq protein sequence ID" value="NP_003074.1"/>
</dbReference>
<dbReference type="UCSC" id="uc002miw.3">
    <property type="organism name" value="human"/>
</dbReference>
<dbReference type="AGR" id="HGNC:11135"/>
<dbReference type="CTD" id="6618"/>
<dbReference type="DisGeNET" id="6618"/>
<dbReference type="GeneCards" id="SNAPC2"/>
<dbReference type="HGNC" id="HGNC:11135">
    <property type="gene designation" value="SNAPC2"/>
</dbReference>
<dbReference type="HPA" id="ENSG00000104976">
    <property type="expression patterns" value="Low tissue specificity"/>
</dbReference>
<dbReference type="MIM" id="605076">
    <property type="type" value="gene"/>
</dbReference>
<dbReference type="neXtProt" id="NX_Q13487"/>
<dbReference type="OpenTargets" id="ENSG00000104976"/>
<dbReference type="PharmGKB" id="PA35983"/>
<dbReference type="VEuPathDB" id="HostDB:ENSG00000104976"/>
<dbReference type="eggNOG" id="ENOG502S260">
    <property type="taxonomic scope" value="Eukaryota"/>
</dbReference>
<dbReference type="GeneTree" id="ENSGT00390000017407"/>
<dbReference type="HOGENOM" id="CLU_048442_0_0_1"/>
<dbReference type="InParanoid" id="Q13487"/>
<dbReference type="OMA" id="APIEVWI"/>
<dbReference type="OrthoDB" id="5990578at2759"/>
<dbReference type="PAN-GO" id="Q13487">
    <property type="GO annotations" value="1 GO annotation based on evolutionary models"/>
</dbReference>
<dbReference type="PhylomeDB" id="Q13487"/>
<dbReference type="TreeFam" id="TF336993"/>
<dbReference type="PathwayCommons" id="Q13487"/>
<dbReference type="Reactome" id="R-HSA-6807505">
    <property type="pathway name" value="RNA polymerase II transcribes snRNA genes"/>
</dbReference>
<dbReference type="Reactome" id="R-HSA-749476">
    <property type="pathway name" value="RNA Polymerase III Abortive And Retractive Initiation"/>
</dbReference>
<dbReference type="Reactome" id="R-HSA-76071">
    <property type="pathway name" value="RNA Polymerase III Transcription Initiation From Type 3 Promoter"/>
</dbReference>
<dbReference type="SignaLink" id="Q13487"/>
<dbReference type="BioGRID-ORCS" id="6618">
    <property type="hits" value="770 hits in 1174 CRISPR screens"/>
</dbReference>
<dbReference type="CD-CODE" id="8C2F96ED">
    <property type="entry name" value="Centrosome"/>
</dbReference>
<dbReference type="CD-CODE" id="A0DCDA94">
    <property type="entry name" value="DNA damage foci"/>
</dbReference>
<dbReference type="ChiTaRS" id="SNAPC2">
    <property type="organism name" value="human"/>
</dbReference>
<dbReference type="GeneWiki" id="SNAPC2"/>
<dbReference type="GenomeRNAi" id="6618"/>
<dbReference type="Pharos" id="Q13487">
    <property type="development level" value="Tdark"/>
</dbReference>
<dbReference type="PRO" id="PR:Q13487"/>
<dbReference type="Proteomes" id="UP000005640">
    <property type="component" value="Chromosome 19"/>
</dbReference>
<dbReference type="RNAct" id="Q13487">
    <property type="molecule type" value="protein"/>
</dbReference>
<dbReference type="Bgee" id="ENSG00000104976">
    <property type="expression patterns" value="Expressed in right uterine tube and 120 other cell types or tissues"/>
</dbReference>
<dbReference type="ExpressionAtlas" id="Q13487">
    <property type="expression patterns" value="baseline and differential"/>
</dbReference>
<dbReference type="GO" id="GO:0005829">
    <property type="term" value="C:cytosol"/>
    <property type="evidence" value="ECO:0000314"/>
    <property type="project" value="HPA"/>
</dbReference>
<dbReference type="GO" id="GO:0016604">
    <property type="term" value="C:nuclear body"/>
    <property type="evidence" value="ECO:0000314"/>
    <property type="project" value="HPA"/>
</dbReference>
<dbReference type="GO" id="GO:0005654">
    <property type="term" value="C:nucleoplasm"/>
    <property type="evidence" value="ECO:0000314"/>
    <property type="project" value="HPA"/>
</dbReference>
<dbReference type="GO" id="GO:0005634">
    <property type="term" value="C:nucleus"/>
    <property type="evidence" value="ECO:0000304"/>
    <property type="project" value="ProtInc"/>
</dbReference>
<dbReference type="GO" id="GO:0016251">
    <property type="term" value="F:RNA polymerase II general transcription initiation factor activity"/>
    <property type="evidence" value="ECO:0000303"/>
    <property type="project" value="ARUK-UCL"/>
</dbReference>
<dbReference type="GO" id="GO:0009301">
    <property type="term" value="P:snRNA transcription"/>
    <property type="evidence" value="ECO:0000304"/>
    <property type="project" value="ProtInc"/>
</dbReference>
<dbReference type="GO" id="GO:0006366">
    <property type="term" value="P:transcription by RNA polymerase II"/>
    <property type="evidence" value="ECO:0000304"/>
    <property type="project" value="ProtInc"/>
</dbReference>
<dbReference type="GO" id="GO:0006383">
    <property type="term" value="P:transcription by RNA polymerase III"/>
    <property type="evidence" value="ECO:0000304"/>
    <property type="project" value="ProtInc"/>
</dbReference>
<dbReference type="InterPro" id="IPR021281">
    <property type="entry name" value="SNAPC2"/>
</dbReference>
<dbReference type="PANTHER" id="PTHR15132">
    <property type="entry name" value="SNRNA-ACTIVATING PROTEIN COMPLEX SUBUNIT 2"/>
    <property type="match status" value="1"/>
</dbReference>
<dbReference type="PANTHER" id="PTHR15132:SF1">
    <property type="entry name" value="SNRNA-ACTIVATING PROTEIN COMPLEX SUBUNIT 2"/>
    <property type="match status" value="1"/>
</dbReference>
<dbReference type="Pfam" id="PF11035">
    <property type="entry name" value="SNAPC2"/>
    <property type="match status" value="1"/>
</dbReference>
<sequence>MKPPPRRRAAPARYLGEVTGPATWSAREKRQLVRLLQARQGQPEPDATELARELRGRSEAEIRVFLQQLKGRVAREAIQKVHPGGLQGPRRREAQPPAPIEVWTDLAEKITGPLEEALAVAFSQVLTIAATEPVTLLHSKPPKPTQARGKPLLLSAPGGQEDPAPEIPSSAPAAPSSAPRTPDPAPEKPSESSAGPSTEEDFAVDFEKIYKYLSSVSRSGRSPELSAAESAVVLDLLMSLPEELPLLPCTALVEHMTETYLRLTAPQPIPAGGSLGPAAEGDGAGSKAPEETPPATEKAEHSELKSPWQAAGICPLNPFLVPLELLGRAATPAR</sequence>